<name>FDX2_MOUSE</name>
<feature type="transit peptide" description="Mitochondrion" evidence="4">
    <location>
        <begin position="1"/>
        <end position="43"/>
    </location>
</feature>
<feature type="chain" id="PRO_0000325953" description="Ferredoxin-2, mitochondrial">
    <location>
        <begin position="44"/>
        <end position="174"/>
    </location>
</feature>
<feature type="domain" description="2Fe-2S ferredoxin-type" evidence="5">
    <location>
        <begin position="59"/>
        <end position="161"/>
    </location>
</feature>
<feature type="region of interest" description="Disordered" evidence="6">
    <location>
        <begin position="26"/>
        <end position="52"/>
    </location>
</feature>
<feature type="binding site" evidence="5">
    <location>
        <position position="96"/>
    </location>
    <ligand>
        <name>[2Fe-2S] cluster</name>
        <dbReference type="ChEBI" id="CHEBI:190135"/>
    </ligand>
</feature>
<feature type="binding site" evidence="5">
    <location>
        <position position="102"/>
    </location>
    <ligand>
        <name>[2Fe-2S] cluster</name>
        <dbReference type="ChEBI" id="CHEBI:190135"/>
    </ligand>
</feature>
<feature type="binding site" evidence="5">
    <location>
        <position position="105"/>
    </location>
    <ligand>
        <name>[2Fe-2S] cluster</name>
        <dbReference type="ChEBI" id="CHEBI:190135"/>
    </ligand>
</feature>
<feature type="binding site" evidence="5">
    <location>
        <position position="142"/>
    </location>
    <ligand>
        <name>[2Fe-2S] cluster</name>
        <dbReference type="ChEBI" id="CHEBI:190135"/>
    </ligand>
</feature>
<feature type="splice variant" id="VSP_032498" description="In isoform 2." evidence="7">
    <location>
        <begin position="1"/>
        <end position="126"/>
    </location>
</feature>
<feature type="sequence conflict" description="In Ref. 1; BAB26771." evidence="8" ref="1">
    <original>A</original>
    <variation>G</variation>
    <location>
        <position position="11"/>
    </location>
</feature>
<keyword id="KW-0001">2Fe-2S</keyword>
<keyword id="KW-0025">Alternative splicing</keyword>
<keyword id="KW-0249">Electron transport</keyword>
<keyword id="KW-0408">Iron</keyword>
<keyword id="KW-0411">Iron-sulfur</keyword>
<keyword id="KW-0479">Metal-binding</keyword>
<keyword id="KW-0496">Mitochondrion</keyword>
<keyword id="KW-1185">Reference proteome</keyword>
<keyword id="KW-0809">Transit peptide</keyword>
<keyword id="KW-0813">Transport</keyword>
<accession>Q9CPW2</accession>
<accession>Q6P8M0</accession>
<accession>Q9CV00</accession>
<evidence type="ECO:0000250" key="1">
    <source>
        <dbReference type="UniProtKB" id="P10109"/>
    </source>
</evidence>
<evidence type="ECO:0000250" key="2">
    <source>
        <dbReference type="UniProtKB" id="Q6P4F2"/>
    </source>
</evidence>
<evidence type="ECO:0000250" key="3">
    <source>
        <dbReference type="UniProtKB" id="Q9H1K1"/>
    </source>
</evidence>
<evidence type="ECO:0000255" key="4"/>
<evidence type="ECO:0000255" key="5">
    <source>
        <dbReference type="PROSITE-ProRule" id="PRU00465"/>
    </source>
</evidence>
<evidence type="ECO:0000256" key="6">
    <source>
        <dbReference type="SAM" id="MobiDB-lite"/>
    </source>
</evidence>
<evidence type="ECO:0000303" key="7">
    <source>
    </source>
</evidence>
<evidence type="ECO:0000305" key="8"/>
<evidence type="ECO:0000312" key="9">
    <source>
        <dbReference type="MGI" id="MGI:1915415"/>
    </source>
</evidence>
<protein>
    <recommendedName>
        <fullName evidence="8">Ferredoxin-2, mitochondrial</fullName>
    </recommendedName>
    <alternativeName>
        <fullName>Adrenodoxin-like protein</fullName>
    </alternativeName>
    <alternativeName>
        <fullName>Ferredoxin-1-like protein</fullName>
    </alternativeName>
</protein>
<proteinExistence type="evidence at protein level"/>
<gene>
    <name evidence="9" type="primary">Fdx2</name>
    <name type="synonym">Fdx1l</name>
</gene>
<dbReference type="EMBL" id="AK008401">
    <property type="protein sequence ID" value="BAB25650.1"/>
    <property type="molecule type" value="mRNA"/>
</dbReference>
<dbReference type="EMBL" id="AK010211">
    <property type="protein sequence ID" value="BAB26771.1"/>
    <property type="status" value="ALT_FRAME"/>
    <property type="molecule type" value="mRNA"/>
</dbReference>
<dbReference type="EMBL" id="AK020979">
    <property type="protein sequence ID" value="BAB32267.1"/>
    <property type="molecule type" value="mRNA"/>
</dbReference>
<dbReference type="EMBL" id="BC061189">
    <property type="protein sequence ID" value="AAH61189.1"/>
    <property type="molecule type" value="mRNA"/>
</dbReference>
<dbReference type="CCDS" id="CCDS22892.1">
    <molecule id="Q9CPW2-1"/>
</dbReference>
<dbReference type="RefSeq" id="NP_001034913.1">
    <molecule id="Q9CPW2-1"/>
    <property type="nucleotide sequence ID" value="NM_001039824.3"/>
</dbReference>
<dbReference type="SMR" id="Q9CPW2"/>
<dbReference type="BioGRID" id="426689">
    <property type="interactions" value="1"/>
</dbReference>
<dbReference type="ComplexPortal" id="CPX-5823">
    <property type="entry name" value="Mitochondrial NIAUFX iron-sulfur cluster assembly complex"/>
</dbReference>
<dbReference type="FunCoup" id="Q9CPW2">
    <property type="interactions" value="1091"/>
</dbReference>
<dbReference type="STRING" id="10090.ENSMUSP00000010348"/>
<dbReference type="iPTMnet" id="Q9CPW2"/>
<dbReference type="PhosphoSitePlus" id="Q9CPW2"/>
<dbReference type="PaxDb" id="10090-ENSMUSP00000010348"/>
<dbReference type="PeptideAtlas" id="Q9CPW2"/>
<dbReference type="ProteomicsDB" id="271737">
    <molecule id="Q9CPW2-1"/>
</dbReference>
<dbReference type="ProteomicsDB" id="271738">
    <molecule id="Q9CPW2-2"/>
</dbReference>
<dbReference type="Pumba" id="Q9CPW2"/>
<dbReference type="DNASU" id="68165"/>
<dbReference type="Ensembl" id="ENSMUST00000010348.7">
    <molecule id="Q9CPW2-1"/>
    <property type="protein sequence ID" value="ENSMUSP00000010348.6"/>
    <property type="gene ID" value="ENSMUSG00000079677.3"/>
</dbReference>
<dbReference type="GeneID" id="68165"/>
<dbReference type="KEGG" id="mmu:68165"/>
<dbReference type="UCSC" id="uc009okb.1">
    <molecule id="Q9CPW2-1"/>
    <property type="organism name" value="mouse"/>
</dbReference>
<dbReference type="AGR" id="MGI:1915415"/>
<dbReference type="CTD" id="112812"/>
<dbReference type="MGI" id="MGI:1915415">
    <property type="gene designation" value="Fdx2"/>
</dbReference>
<dbReference type="VEuPathDB" id="HostDB:ENSMUSG00000079677"/>
<dbReference type="eggNOG" id="KOG3309">
    <property type="taxonomic scope" value="Eukaryota"/>
</dbReference>
<dbReference type="GeneTree" id="ENSGT00940000161143"/>
<dbReference type="HOGENOM" id="CLU_082632_0_2_1"/>
<dbReference type="InParanoid" id="Q9CPW2"/>
<dbReference type="OMA" id="RGCHWAC"/>
<dbReference type="OrthoDB" id="268593at2759"/>
<dbReference type="PhylomeDB" id="Q9CPW2"/>
<dbReference type="TreeFam" id="TF354319"/>
<dbReference type="Reactome" id="R-MMU-1362409">
    <property type="pathway name" value="Mitochondrial iron-sulfur cluster biogenesis"/>
</dbReference>
<dbReference type="Reactome" id="R-MMU-196108">
    <property type="pathway name" value="Pregnenolone biosynthesis"/>
</dbReference>
<dbReference type="Reactome" id="R-MMU-211976">
    <property type="pathway name" value="Endogenous sterols"/>
</dbReference>
<dbReference type="Reactome" id="R-MMU-2395516">
    <property type="pathway name" value="Electron transport from NADPH to Ferredoxin"/>
</dbReference>
<dbReference type="BioGRID-ORCS" id="68165">
    <property type="hits" value="29 hits in 80 CRISPR screens"/>
</dbReference>
<dbReference type="PRO" id="PR:Q9CPW2"/>
<dbReference type="Proteomes" id="UP000000589">
    <property type="component" value="Chromosome 9"/>
</dbReference>
<dbReference type="RNAct" id="Q9CPW2">
    <property type="molecule type" value="protein"/>
</dbReference>
<dbReference type="Bgee" id="ENSMUSG00000079677">
    <property type="expression patterns" value="Expressed in quadriceps femoris and 64 other cell types or tissues"/>
</dbReference>
<dbReference type="GO" id="GO:1990229">
    <property type="term" value="C:iron-sulfur cluster assembly complex"/>
    <property type="evidence" value="ECO:0000303"/>
    <property type="project" value="ComplexPortal"/>
</dbReference>
<dbReference type="GO" id="GO:0005759">
    <property type="term" value="C:mitochondrial matrix"/>
    <property type="evidence" value="ECO:0007669"/>
    <property type="project" value="UniProtKB-SubCell"/>
</dbReference>
<dbReference type="GO" id="GO:0005739">
    <property type="term" value="C:mitochondrion"/>
    <property type="evidence" value="ECO:0007005"/>
    <property type="project" value="MGI"/>
</dbReference>
<dbReference type="GO" id="GO:0051537">
    <property type="term" value="F:2 iron, 2 sulfur cluster binding"/>
    <property type="evidence" value="ECO:0007669"/>
    <property type="project" value="UniProtKB-KW"/>
</dbReference>
<dbReference type="GO" id="GO:0009055">
    <property type="term" value="F:electron transfer activity"/>
    <property type="evidence" value="ECO:0000250"/>
    <property type="project" value="UniProtKB"/>
</dbReference>
<dbReference type="GO" id="GO:0046872">
    <property type="term" value="F:metal ion binding"/>
    <property type="evidence" value="ECO:0007669"/>
    <property type="project" value="UniProtKB-KW"/>
</dbReference>
<dbReference type="GO" id="GO:0044571">
    <property type="term" value="P:[2Fe-2S] cluster assembly"/>
    <property type="evidence" value="ECO:0000250"/>
    <property type="project" value="UniProtKB"/>
</dbReference>
<dbReference type="GO" id="GO:0044572">
    <property type="term" value="P:[4Fe-4S] cluster assembly"/>
    <property type="evidence" value="ECO:0000250"/>
    <property type="project" value="UniProtKB"/>
</dbReference>
<dbReference type="GO" id="GO:0016226">
    <property type="term" value="P:iron-sulfur cluster assembly"/>
    <property type="evidence" value="ECO:0000303"/>
    <property type="project" value="ComplexPortal"/>
</dbReference>
<dbReference type="GO" id="GO:0140647">
    <property type="term" value="P:P450-containing electron transport chain"/>
    <property type="evidence" value="ECO:0007669"/>
    <property type="project" value="InterPro"/>
</dbReference>
<dbReference type="GO" id="GO:0006744">
    <property type="term" value="P:ubiquinone biosynthetic process"/>
    <property type="evidence" value="ECO:0000250"/>
    <property type="project" value="UniProtKB"/>
</dbReference>
<dbReference type="CDD" id="cd00207">
    <property type="entry name" value="fer2"/>
    <property type="match status" value="1"/>
</dbReference>
<dbReference type="FunFam" id="3.10.20.30:FF:000013">
    <property type="entry name" value="Adrenodoxin, mitochondrial"/>
    <property type="match status" value="1"/>
</dbReference>
<dbReference type="Gene3D" id="3.10.20.30">
    <property type="match status" value="1"/>
</dbReference>
<dbReference type="InterPro" id="IPR036010">
    <property type="entry name" value="2Fe-2S_ferredoxin-like_sf"/>
</dbReference>
<dbReference type="InterPro" id="IPR001041">
    <property type="entry name" value="2Fe-2S_ferredoxin-type"/>
</dbReference>
<dbReference type="InterPro" id="IPR001055">
    <property type="entry name" value="Adrenodoxin-like"/>
</dbReference>
<dbReference type="InterPro" id="IPR018298">
    <property type="entry name" value="Adrenodoxin_Fe-S_BS"/>
</dbReference>
<dbReference type="InterPro" id="IPR012675">
    <property type="entry name" value="Beta-grasp_dom_sf"/>
</dbReference>
<dbReference type="PANTHER" id="PTHR23426:SF65">
    <property type="entry name" value="FERREDOXIN-2, MITOCHONDRIAL"/>
    <property type="match status" value="1"/>
</dbReference>
<dbReference type="PANTHER" id="PTHR23426">
    <property type="entry name" value="FERREDOXIN/ADRENODOXIN"/>
    <property type="match status" value="1"/>
</dbReference>
<dbReference type="Pfam" id="PF00111">
    <property type="entry name" value="Fer2"/>
    <property type="match status" value="1"/>
</dbReference>
<dbReference type="PRINTS" id="PR00355">
    <property type="entry name" value="ADRENODOXIN"/>
</dbReference>
<dbReference type="SUPFAM" id="SSF54292">
    <property type="entry name" value="2Fe-2S ferredoxin-like"/>
    <property type="match status" value="1"/>
</dbReference>
<dbReference type="PROSITE" id="PS51085">
    <property type="entry name" value="2FE2S_FER_2"/>
    <property type="match status" value="1"/>
</dbReference>
<dbReference type="PROSITE" id="PS00814">
    <property type="entry name" value="ADX"/>
    <property type="match status" value="1"/>
</dbReference>
<comment type="function">
    <text evidence="2 3">Electron donor, of the core iron-sulfur cluster (ISC) assembly complex, that acts to reduce the persulfide into sulfide during [2Fe-2S] clusters assembly on the scaffolding protein ISCU (By similarity). The core iron-sulfur cluster (ISC) assembly complex is involved in the de novo synthesis of a [2Fe-2S] cluster, the first step of the mitochondrial iron-sulfur protein biogenesis. This process is initiated by the cysteine desulfurase complex (NFS1:LYRM4:NDUFAB1) that produces persulfide which is delivered on the scaffold protein ISCU in a FXN-dependent manner. Then this complex is stabilized by FDX2 which provides reducing equivalents to accomplish the [2Fe-2S] cluster assembly. Finally, the [2Fe-2S] cluster is transferred from ISCU to chaperone proteins, including HSCB, HSPA9 and GLRX5 (By similarity). Essential for coenzyme Q biosynthesis: together with FDXR, transfers the electrons required for the hydroxylation reaction performed by COQ6 (By similarity).</text>
</comment>
<comment type="cofactor">
    <cofactor evidence="3">
        <name>[2Fe-2S] cluster</name>
        <dbReference type="ChEBI" id="CHEBI:190135"/>
    </cofactor>
    <text evidence="3">Binds 1 [2Fe-2S] cluster.</text>
</comment>
<comment type="subunit">
    <text evidence="2">Component of the mitochondrial core iron-sulfur cluster (ISC) complex composed of NFS1, LYRM4, NDUFAB1, ISCU, FXN, and FDX2; this complex is a heterohexamer containing two copies of each monomer. Form a heterodimer complex with NFS1. Interacts (in both their reduced and oxidized states) with the cysteine desulfurase (NFS1:LYRM4) complex; this interaction stimulates cysteine desulfurase activity, and serves as a reductant for Fe-S cluster assembly.</text>
</comment>
<comment type="subcellular location">
    <subcellularLocation>
        <location evidence="3">Mitochondrion</location>
    </subcellularLocation>
    <subcellularLocation>
        <location evidence="1">Mitochondrion matrix</location>
    </subcellularLocation>
</comment>
<comment type="alternative products">
    <event type="alternative splicing"/>
    <isoform>
        <id>Q9CPW2-1</id>
        <name>1</name>
        <sequence type="displayed"/>
    </isoform>
    <isoform>
        <id>Q9CPW2-2</id>
        <name>2</name>
        <sequence type="described" ref="VSP_032498"/>
    </isoform>
</comment>
<comment type="similarity">
    <text evidence="8">Belongs to the adrenodoxin/putidaredoxin family.</text>
</comment>
<comment type="sequence caution" evidence="8">
    <conflict type="frameshift">
        <sequence resource="EMBL-CDS" id="BAB26771"/>
    </conflict>
</comment>
<reference key="1">
    <citation type="journal article" date="2005" name="Science">
        <title>The transcriptional landscape of the mammalian genome.</title>
        <authorList>
            <person name="Carninci P."/>
            <person name="Kasukawa T."/>
            <person name="Katayama S."/>
            <person name="Gough J."/>
            <person name="Frith M.C."/>
            <person name="Maeda N."/>
            <person name="Oyama R."/>
            <person name="Ravasi T."/>
            <person name="Lenhard B."/>
            <person name="Wells C."/>
            <person name="Kodzius R."/>
            <person name="Shimokawa K."/>
            <person name="Bajic V.B."/>
            <person name="Brenner S.E."/>
            <person name="Batalov S."/>
            <person name="Forrest A.R."/>
            <person name="Zavolan M."/>
            <person name="Davis M.J."/>
            <person name="Wilming L.G."/>
            <person name="Aidinis V."/>
            <person name="Allen J.E."/>
            <person name="Ambesi-Impiombato A."/>
            <person name="Apweiler R."/>
            <person name="Aturaliya R.N."/>
            <person name="Bailey T.L."/>
            <person name="Bansal M."/>
            <person name="Baxter L."/>
            <person name="Beisel K.W."/>
            <person name="Bersano T."/>
            <person name="Bono H."/>
            <person name="Chalk A.M."/>
            <person name="Chiu K.P."/>
            <person name="Choudhary V."/>
            <person name="Christoffels A."/>
            <person name="Clutterbuck D.R."/>
            <person name="Crowe M.L."/>
            <person name="Dalla E."/>
            <person name="Dalrymple B.P."/>
            <person name="de Bono B."/>
            <person name="Della Gatta G."/>
            <person name="di Bernardo D."/>
            <person name="Down T."/>
            <person name="Engstrom P."/>
            <person name="Fagiolini M."/>
            <person name="Faulkner G."/>
            <person name="Fletcher C.F."/>
            <person name="Fukushima T."/>
            <person name="Furuno M."/>
            <person name="Futaki S."/>
            <person name="Gariboldi M."/>
            <person name="Georgii-Hemming P."/>
            <person name="Gingeras T.R."/>
            <person name="Gojobori T."/>
            <person name="Green R.E."/>
            <person name="Gustincich S."/>
            <person name="Harbers M."/>
            <person name="Hayashi Y."/>
            <person name="Hensch T.K."/>
            <person name="Hirokawa N."/>
            <person name="Hill D."/>
            <person name="Huminiecki L."/>
            <person name="Iacono M."/>
            <person name="Ikeo K."/>
            <person name="Iwama A."/>
            <person name="Ishikawa T."/>
            <person name="Jakt M."/>
            <person name="Kanapin A."/>
            <person name="Katoh M."/>
            <person name="Kawasawa Y."/>
            <person name="Kelso J."/>
            <person name="Kitamura H."/>
            <person name="Kitano H."/>
            <person name="Kollias G."/>
            <person name="Krishnan S.P."/>
            <person name="Kruger A."/>
            <person name="Kummerfeld S.K."/>
            <person name="Kurochkin I.V."/>
            <person name="Lareau L.F."/>
            <person name="Lazarevic D."/>
            <person name="Lipovich L."/>
            <person name="Liu J."/>
            <person name="Liuni S."/>
            <person name="McWilliam S."/>
            <person name="Madan Babu M."/>
            <person name="Madera M."/>
            <person name="Marchionni L."/>
            <person name="Matsuda H."/>
            <person name="Matsuzawa S."/>
            <person name="Miki H."/>
            <person name="Mignone F."/>
            <person name="Miyake S."/>
            <person name="Morris K."/>
            <person name="Mottagui-Tabar S."/>
            <person name="Mulder N."/>
            <person name="Nakano N."/>
            <person name="Nakauchi H."/>
            <person name="Ng P."/>
            <person name="Nilsson R."/>
            <person name="Nishiguchi S."/>
            <person name="Nishikawa S."/>
            <person name="Nori F."/>
            <person name="Ohara O."/>
            <person name="Okazaki Y."/>
            <person name="Orlando V."/>
            <person name="Pang K.C."/>
            <person name="Pavan W.J."/>
            <person name="Pavesi G."/>
            <person name="Pesole G."/>
            <person name="Petrovsky N."/>
            <person name="Piazza S."/>
            <person name="Reed J."/>
            <person name="Reid J.F."/>
            <person name="Ring B.Z."/>
            <person name="Ringwald M."/>
            <person name="Rost B."/>
            <person name="Ruan Y."/>
            <person name="Salzberg S.L."/>
            <person name="Sandelin A."/>
            <person name="Schneider C."/>
            <person name="Schoenbach C."/>
            <person name="Sekiguchi K."/>
            <person name="Semple C.A."/>
            <person name="Seno S."/>
            <person name="Sessa L."/>
            <person name="Sheng Y."/>
            <person name="Shibata Y."/>
            <person name="Shimada H."/>
            <person name="Shimada K."/>
            <person name="Silva D."/>
            <person name="Sinclair B."/>
            <person name="Sperling S."/>
            <person name="Stupka E."/>
            <person name="Sugiura K."/>
            <person name="Sultana R."/>
            <person name="Takenaka Y."/>
            <person name="Taki K."/>
            <person name="Tammoja K."/>
            <person name="Tan S.L."/>
            <person name="Tang S."/>
            <person name="Taylor M.S."/>
            <person name="Tegner J."/>
            <person name="Teichmann S.A."/>
            <person name="Ueda H.R."/>
            <person name="van Nimwegen E."/>
            <person name="Verardo R."/>
            <person name="Wei C.L."/>
            <person name="Yagi K."/>
            <person name="Yamanishi H."/>
            <person name="Zabarovsky E."/>
            <person name="Zhu S."/>
            <person name="Zimmer A."/>
            <person name="Hide W."/>
            <person name="Bult C."/>
            <person name="Grimmond S.M."/>
            <person name="Teasdale R.D."/>
            <person name="Liu E.T."/>
            <person name="Brusic V."/>
            <person name="Quackenbush J."/>
            <person name="Wahlestedt C."/>
            <person name="Mattick J.S."/>
            <person name="Hume D.A."/>
            <person name="Kai C."/>
            <person name="Sasaki D."/>
            <person name="Tomaru Y."/>
            <person name="Fukuda S."/>
            <person name="Kanamori-Katayama M."/>
            <person name="Suzuki M."/>
            <person name="Aoki J."/>
            <person name="Arakawa T."/>
            <person name="Iida J."/>
            <person name="Imamura K."/>
            <person name="Itoh M."/>
            <person name="Kato T."/>
            <person name="Kawaji H."/>
            <person name="Kawagashira N."/>
            <person name="Kawashima T."/>
            <person name="Kojima M."/>
            <person name="Kondo S."/>
            <person name="Konno H."/>
            <person name="Nakano K."/>
            <person name="Ninomiya N."/>
            <person name="Nishio T."/>
            <person name="Okada M."/>
            <person name="Plessy C."/>
            <person name="Shibata K."/>
            <person name="Shiraki T."/>
            <person name="Suzuki S."/>
            <person name="Tagami M."/>
            <person name="Waki K."/>
            <person name="Watahiki A."/>
            <person name="Okamura-Oho Y."/>
            <person name="Suzuki H."/>
            <person name="Kawai J."/>
            <person name="Hayashizaki Y."/>
        </authorList>
    </citation>
    <scope>NUCLEOTIDE SEQUENCE [LARGE SCALE MRNA] (ISOFORM 1)</scope>
    <source>
        <strain>C57BL/6J</strain>
        <tissue>Corpora quadrigemina</tissue>
        <tissue>Small intestine</tissue>
    </source>
</reference>
<reference key="2">
    <citation type="journal article" date="2004" name="Genome Res.">
        <title>The status, quality, and expansion of the NIH full-length cDNA project: the Mammalian Gene Collection (MGC).</title>
        <authorList>
            <consortium name="The MGC Project Team"/>
        </authorList>
    </citation>
    <scope>NUCLEOTIDE SEQUENCE [LARGE SCALE MRNA] (ISOFORM 2)</scope>
    <source>
        <tissue>Brain</tissue>
    </source>
</reference>
<reference key="3">
    <citation type="journal article" date="2010" name="Cell">
        <title>A tissue-specific atlas of mouse protein phosphorylation and expression.</title>
        <authorList>
            <person name="Huttlin E.L."/>
            <person name="Jedrychowski M.P."/>
            <person name="Elias J.E."/>
            <person name="Goswami T."/>
            <person name="Rad R."/>
            <person name="Beausoleil S.A."/>
            <person name="Villen J."/>
            <person name="Haas W."/>
            <person name="Sowa M.E."/>
            <person name="Gygi S.P."/>
        </authorList>
    </citation>
    <scope>IDENTIFICATION BY MASS SPECTROMETRY [LARGE SCALE ANALYSIS]</scope>
    <source>
        <tissue>Brain</tissue>
        <tissue>Brown adipose tissue</tissue>
        <tissue>Kidney</tissue>
        <tissue>Liver</tissue>
        <tissue>Testis</tissue>
    </source>
</reference>
<sequence>MAASMARGVSARVLLRAAGGSWGPRAGHAAVTSRTFGTTGERRAGEEAADSPELPRDVVNVVFVDRSGKRIPVRGKVGDNVLYLAQRHGVDLEGACEASLACSTCHVYVSEAHLDLLPPPEEREDDMLDMAPLLQENSRLGCQIVLTPELEGVEFALPKITRNFYVDGHIPKPH</sequence>
<organism>
    <name type="scientific">Mus musculus</name>
    <name type="common">Mouse</name>
    <dbReference type="NCBI Taxonomy" id="10090"/>
    <lineage>
        <taxon>Eukaryota</taxon>
        <taxon>Metazoa</taxon>
        <taxon>Chordata</taxon>
        <taxon>Craniata</taxon>
        <taxon>Vertebrata</taxon>
        <taxon>Euteleostomi</taxon>
        <taxon>Mammalia</taxon>
        <taxon>Eutheria</taxon>
        <taxon>Euarchontoglires</taxon>
        <taxon>Glires</taxon>
        <taxon>Rodentia</taxon>
        <taxon>Myomorpha</taxon>
        <taxon>Muroidea</taxon>
        <taxon>Muridae</taxon>
        <taxon>Murinae</taxon>
        <taxon>Mus</taxon>
        <taxon>Mus</taxon>
    </lineage>
</organism>